<comment type="function">
    <text evidence="1">IF-3 binds to the 30S ribosomal subunit and shifts the equilibrium between 70S ribosomes and their 50S and 30S subunits in favor of the free subunits, thus enhancing the availability of 30S subunits on which protein synthesis initiation begins.</text>
</comment>
<comment type="subunit">
    <text evidence="1">Monomer.</text>
</comment>
<comment type="subcellular location">
    <subcellularLocation>
        <location evidence="1">Cytoplasm</location>
    </subcellularLocation>
</comment>
<comment type="similarity">
    <text evidence="1">Belongs to the IF-3 family.</text>
</comment>
<comment type="sequence caution" evidence="2">
    <conflict type="erroneous initiation">
        <sequence resource="EMBL-CDS" id="AAK99665"/>
    </conflict>
</comment>
<proteinExistence type="inferred from homology"/>
<reference key="1">
    <citation type="journal article" date="2001" name="J. Bacteriol.">
        <title>Genome of the bacterium Streptococcus pneumoniae strain R6.</title>
        <authorList>
            <person name="Hoskins J."/>
            <person name="Alborn W.E. Jr."/>
            <person name="Arnold J."/>
            <person name="Blaszczak L.C."/>
            <person name="Burgett S."/>
            <person name="DeHoff B.S."/>
            <person name="Estrem S.T."/>
            <person name="Fritz L."/>
            <person name="Fu D.-J."/>
            <person name="Fuller W."/>
            <person name="Geringer C."/>
            <person name="Gilmour R."/>
            <person name="Glass J.S."/>
            <person name="Khoja H."/>
            <person name="Kraft A.R."/>
            <person name="Lagace R.E."/>
            <person name="LeBlanc D.J."/>
            <person name="Lee L.N."/>
            <person name="Lefkowitz E.J."/>
            <person name="Lu J."/>
            <person name="Matsushima P."/>
            <person name="McAhren S.M."/>
            <person name="McHenney M."/>
            <person name="McLeaster K."/>
            <person name="Mundy C.W."/>
            <person name="Nicas T.I."/>
            <person name="Norris F.H."/>
            <person name="O'Gara M."/>
            <person name="Peery R.B."/>
            <person name="Robertson G.T."/>
            <person name="Rockey P."/>
            <person name="Sun P.-M."/>
            <person name="Winkler M.E."/>
            <person name="Yang Y."/>
            <person name="Young-Bellido M."/>
            <person name="Zhao G."/>
            <person name="Zook C.A."/>
            <person name="Baltz R.H."/>
            <person name="Jaskunas S.R."/>
            <person name="Rosteck P.R. Jr."/>
            <person name="Skatrud P.L."/>
            <person name="Glass J.I."/>
        </authorList>
    </citation>
    <scope>NUCLEOTIDE SEQUENCE [LARGE SCALE GENOMIC DNA]</scope>
    <source>
        <strain>ATCC BAA-255 / R6</strain>
    </source>
</reference>
<sequence>MFFSNKTKEVKTIAKQDLFINDEIRVREVRLIGLEGEQLGIKPLSEAQALADNANVDLVLIQPQAKPPVAKIMDYGKFKFEYQKKQKEQRKKQSVVTVKEVRLSPTIDKGDFDTKLRNARKFLEKGNKVKVSIRFKGRMITHKEIGAKVLAEFAEATQDIAIIEQRAKMDGRQMFMQLAPATDKK</sequence>
<feature type="chain" id="PRO_0000177589" description="Translation initiation factor IF-3">
    <location>
        <begin position="1"/>
        <end position="185"/>
    </location>
</feature>
<dbReference type="EMBL" id="AE007317">
    <property type="protein sequence ID" value="AAK99665.1"/>
    <property type="status" value="ALT_INIT"/>
    <property type="molecule type" value="Genomic_DNA"/>
</dbReference>
<dbReference type="PIR" id="E97979">
    <property type="entry name" value="E97979"/>
</dbReference>
<dbReference type="RefSeq" id="NP_358455.1">
    <property type="nucleotide sequence ID" value="NC_003098.1"/>
</dbReference>
<dbReference type="SMR" id="P65145"/>
<dbReference type="STRING" id="171101.spr0861"/>
<dbReference type="KEGG" id="spr:spr0861"/>
<dbReference type="PATRIC" id="fig|171101.6.peg.949"/>
<dbReference type="eggNOG" id="COG0290">
    <property type="taxonomic scope" value="Bacteria"/>
</dbReference>
<dbReference type="HOGENOM" id="CLU_054919_3_2_9"/>
<dbReference type="Proteomes" id="UP000000586">
    <property type="component" value="Chromosome"/>
</dbReference>
<dbReference type="GO" id="GO:0005829">
    <property type="term" value="C:cytosol"/>
    <property type="evidence" value="ECO:0000318"/>
    <property type="project" value="GO_Central"/>
</dbReference>
<dbReference type="GO" id="GO:0043022">
    <property type="term" value="F:ribosome binding"/>
    <property type="evidence" value="ECO:0000318"/>
    <property type="project" value="GO_Central"/>
</dbReference>
<dbReference type="GO" id="GO:0003743">
    <property type="term" value="F:translation initiation factor activity"/>
    <property type="evidence" value="ECO:0000318"/>
    <property type="project" value="GO_Central"/>
</dbReference>
<dbReference type="GO" id="GO:0032790">
    <property type="term" value="P:ribosome disassembly"/>
    <property type="evidence" value="ECO:0000318"/>
    <property type="project" value="GO_Central"/>
</dbReference>
<dbReference type="FunFam" id="3.10.20.80:FF:000001">
    <property type="entry name" value="Translation initiation factor IF-3"/>
    <property type="match status" value="1"/>
</dbReference>
<dbReference type="FunFam" id="3.30.110.10:FF:000001">
    <property type="entry name" value="Translation initiation factor IF-3"/>
    <property type="match status" value="1"/>
</dbReference>
<dbReference type="Gene3D" id="3.30.110.10">
    <property type="entry name" value="Translation initiation factor 3 (IF-3), C-terminal domain"/>
    <property type="match status" value="1"/>
</dbReference>
<dbReference type="Gene3D" id="3.10.20.80">
    <property type="entry name" value="Translation initiation factor 3 (IF-3), N-terminal domain"/>
    <property type="match status" value="1"/>
</dbReference>
<dbReference type="HAMAP" id="MF_00080">
    <property type="entry name" value="IF_3"/>
    <property type="match status" value="1"/>
</dbReference>
<dbReference type="InterPro" id="IPR036788">
    <property type="entry name" value="T_IF-3_C_sf"/>
</dbReference>
<dbReference type="InterPro" id="IPR036787">
    <property type="entry name" value="T_IF-3_N_sf"/>
</dbReference>
<dbReference type="InterPro" id="IPR019813">
    <property type="entry name" value="Translation_initiation_fac3_CS"/>
</dbReference>
<dbReference type="InterPro" id="IPR001288">
    <property type="entry name" value="Translation_initiation_fac_3"/>
</dbReference>
<dbReference type="InterPro" id="IPR019815">
    <property type="entry name" value="Translation_initiation_fac_3_C"/>
</dbReference>
<dbReference type="InterPro" id="IPR019814">
    <property type="entry name" value="Translation_initiation_fac_3_N"/>
</dbReference>
<dbReference type="NCBIfam" id="TIGR00168">
    <property type="entry name" value="infC"/>
    <property type="match status" value="1"/>
</dbReference>
<dbReference type="PANTHER" id="PTHR10938">
    <property type="entry name" value="TRANSLATION INITIATION FACTOR IF-3"/>
    <property type="match status" value="1"/>
</dbReference>
<dbReference type="PANTHER" id="PTHR10938:SF0">
    <property type="entry name" value="TRANSLATION INITIATION FACTOR IF-3, MITOCHONDRIAL"/>
    <property type="match status" value="1"/>
</dbReference>
<dbReference type="Pfam" id="PF00707">
    <property type="entry name" value="IF3_C"/>
    <property type="match status" value="1"/>
</dbReference>
<dbReference type="Pfam" id="PF05198">
    <property type="entry name" value="IF3_N"/>
    <property type="match status" value="1"/>
</dbReference>
<dbReference type="SUPFAM" id="SSF55200">
    <property type="entry name" value="Translation initiation factor IF3, C-terminal domain"/>
    <property type="match status" value="1"/>
</dbReference>
<dbReference type="SUPFAM" id="SSF54364">
    <property type="entry name" value="Translation initiation factor IF3, N-terminal domain"/>
    <property type="match status" value="1"/>
</dbReference>
<dbReference type="PROSITE" id="PS00938">
    <property type="entry name" value="IF3"/>
    <property type="match status" value="1"/>
</dbReference>
<name>IF3_STRR6</name>
<protein>
    <recommendedName>
        <fullName evidence="1">Translation initiation factor IF-3</fullName>
    </recommendedName>
</protein>
<keyword id="KW-0963">Cytoplasm</keyword>
<keyword id="KW-0396">Initiation factor</keyword>
<keyword id="KW-0648">Protein biosynthesis</keyword>
<keyword id="KW-1185">Reference proteome</keyword>
<accession>P65145</accession>
<accession>Q97R70</accession>
<organism>
    <name type="scientific">Streptococcus pneumoniae (strain ATCC BAA-255 / R6)</name>
    <dbReference type="NCBI Taxonomy" id="171101"/>
    <lineage>
        <taxon>Bacteria</taxon>
        <taxon>Bacillati</taxon>
        <taxon>Bacillota</taxon>
        <taxon>Bacilli</taxon>
        <taxon>Lactobacillales</taxon>
        <taxon>Streptococcaceae</taxon>
        <taxon>Streptococcus</taxon>
    </lineage>
</organism>
<evidence type="ECO:0000255" key="1">
    <source>
        <dbReference type="HAMAP-Rule" id="MF_00080"/>
    </source>
</evidence>
<evidence type="ECO:0000305" key="2"/>
<gene>
    <name evidence="1" type="primary">infC</name>
    <name type="ordered locus">spr0861</name>
</gene>